<sequence length="153" mass="16886">MEKLDRLSEAFKMLLKQEKCSSQSEIVTALQALGFKNINQSKVSRMLSKFGAIRTRNTKMEMVYQLPTELSIPTTSSPLKNLVLDIDYNEVLIVVKTSPGAAQLIARLLDSMGKSEGILGTIAGDDAIFITPTHSTPMETLIKNITTLFESSF</sequence>
<comment type="function">
    <text evidence="1">Regulates arginine biosynthesis genes.</text>
</comment>
<comment type="pathway">
    <text>Amino-acid biosynthesis; L-arginine biosynthesis [regulation].</text>
</comment>
<comment type="subcellular location">
    <subcellularLocation>
        <location evidence="1">Cytoplasm</location>
    </subcellularLocation>
</comment>
<comment type="similarity">
    <text evidence="1">Belongs to the ArgR family.</text>
</comment>
<feature type="chain" id="PRO_0000205092" description="Arginine repressor">
    <location>
        <begin position="1"/>
        <end position="153"/>
    </location>
</feature>
<keyword id="KW-0028">Amino-acid biosynthesis</keyword>
<keyword id="KW-0055">Arginine biosynthesis</keyword>
<keyword id="KW-0963">Cytoplasm</keyword>
<keyword id="KW-0238">DNA-binding</keyword>
<keyword id="KW-1185">Reference proteome</keyword>
<keyword id="KW-0678">Repressor</keyword>
<keyword id="KW-0804">Transcription</keyword>
<keyword id="KW-0805">Transcription regulation</keyword>
<accession>Q7VP42</accession>
<name>ARGR_HAEDU</name>
<dbReference type="EMBL" id="AE017143">
    <property type="protein sequence ID" value="AAP95245.1"/>
    <property type="molecule type" value="Genomic_DNA"/>
</dbReference>
<dbReference type="RefSeq" id="WP_010944298.1">
    <property type="nucleotide sequence ID" value="NC_002940.2"/>
</dbReference>
<dbReference type="SMR" id="Q7VP42"/>
<dbReference type="STRING" id="233412.HD_0262"/>
<dbReference type="KEGG" id="hdu:HD_0262"/>
<dbReference type="eggNOG" id="COG1438">
    <property type="taxonomic scope" value="Bacteria"/>
</dbReference>
<dbReference type="HOGENOM" id="CLU_097103_2_0_6"/>
<dbReference type="OrthoDB" id="7060358at2"/>
<dbReference type="UniPathway" id="UPA00068"/>
<dbReference type="Proteomes" id="UP000001022">
    <property type="component" value="Chromosome"/>
</dbReference>
<dbReference type="GO" id="GO:0005737">
    <property type="term" value="C:cytoplasm"/>
    <property type="evidence" value="ECO:0007669"/>
    <property type="project" value="UniProtKB-SubCell"/>
</dbReference>
<dbReference type="GO" id="GO:0034618">
    <property type="term" value="F:arginine binding"/>
    <property type="evidence" value="ECO:0007669"/>
    <property type="project" value="InterPro"/>
</dbReference>
<dbReference type="GO" id="GO:0003677">
    <property type="term" value="F:DNA binding"/>
    <property type="evidence" value="ECO:0007669"/>
    <property type="project" value="UniProtKB-KW"/>
</dbReference>
<dbReference type="GO" id="GO:0003700">
    <property type="term" value="F:DNA-binding transcription factor activity"/>
    <property type="evidence" value="ECO:0007669"/>
    <property type="project" value="UniProtKB-UniRule"/>
</dbReference>
<dbReference type="GO" id="GO:0006526">
    <property type="term" value="P:L-arginine biosynthetic process"/>
    <property type="evidence" value="ECO:0007669"/>
    <property type="project" value="UniProtKB-UniPathway"/>
</dbReference>
<dbReference type="GO" id="GO:0051259">
    <property type="term" value="P:protein complex oligomerization"/>
    <property type="evidence" value="ECO:0007669"/>
    <property type="project" value="InterPro"/>
</dbReference>
<dbReference type="GO" id="GO:1900079">
    <property type="term" value="P:regulation of arginine biosynthetic process"/>
    <property type="evidence" value="ECO:0007669"/>
    <property type="project" value="UniProtKB-UniRule"/>
</dbReference>
<dbReference type="Gene3D" id="3.30.1360.40">
    <property type="match status" value="1"/>
</dbReference>
<dbReference type="Gene3D" id="1.10.10.10">
    <property type="entry name" value="Winged helix-like DNA-binding domain superfamily/Winged helix DNA-binding domain"/>
    <property type="match status" value="1"/>
</dbReference>
<dbReference type="HAMAP" id="MF_00173">
    <property type="entry name" value="Arg_repressor"/>
    <property type="match status" value="1"/>
</dbReference>
<dbReference type="InterPro" id="IPR001669">
    <property type="entry name" value="Arg_repress"/>
</dbReference>
<dbReference type="InterPro" id="IPR020899">
    <property type="entry name" value="Arg_repress_C"/>
</dbReference>
<dbReference type="InterPro" id="IPR036251">
    <property type="entry name" value="Arg_repress_C_sf"/>
</dbReference>
<dbReference type="InterPro" id="IPR020900">
    <property type="entry name" value="Arg_repress_DNA-bd"/>
</dbReference>
<dbReference type="InterPro" id="IPR036388">
    <property type="entry name" value="WH-like_DNA-bd_sf"/>
</dbReference>
<dbReference type="InterPro" id="IPR036390">
    <property type="entry name" value="WH_DNA-bd_sf"/>
</dbReference>
<dbReference type="NCBIfam" id="TIGR01529">
    <property type="entry name" value="argR_whole"/>
    <property type="match status" value="1"/>
</dbReference>
<dbReference type="NCBIfam" id="NF003457">
    <property type="entry name" value="PRK05066.1"/>
    <property type="match status" value="1"/>
</dbReference>
<dbReference type="PANTHER" id="PTHR34471">
    <property type="entry name" value="ARGININE REPRESSOR"/>
    <property type="match status" value="1"/>
</dbReference>
<dbReference type="PANTHER" id="PTHR34471:SF1">
    <property type="entry name" value="ARGININE REPRESSOR"/>
    <property type="match status" value="1"/>
</dbReference>
<dbReference type="Pfam" id="PF01316">
    <property type="entry name" value="Arg_repressor"/>
    <property type="match status" value="1"/>
</dbReference>
<dbReference type="Pfam" id="PF02863">
    <property type="entry name" value="Arg_repressor_C"/>
    <property type="match status" value="1"/>
</dbReference>
<dbReference type="PRINTS" id="PR01467">
    <property type="entry name" value="ARGREPRESSOR"/>
</dbReference>
<dbReference type="SUPFAM" id="SSF55252">
    <property type="entry name" value="C-terminal domain of arginine repressor"/>
    <property type="match status" value="1"/>
</dbReference>
<dbReference type="SUPFAM" id="SSF46785">
    <property type="entry name" value="Winged helix' DNA-binding domain"/>
    <property type="match status" value="1"/>
</dbReference>
<proteinExistence type="inferred from homology"/>
<evidence type="ECO:0000255" key="1">
    <source>
        <dbReference type="HAMAP-Rule" id="MF_00173"/>
    </source>
</evidence>
<gene>
    <name evidence="1" type="primary">argR</name>
    <name type="ordered locus">HD_0262</name>
</gene>
<protein>
    <recommendedName>
        <fullName evidence="1">Arginine repressor</fullName>
    </recommendedName>
</protein>
<reference key="1">
    <citation type="submission" date="2003-06" db="EMBL/GenBank/DDBJ databases">
        <title>The complete genome sequence of Haemophilus ducreyi.</title>
        <authorList>
            <person name="Munson R.S. Jr."/>
            <person name="Ray W.C."/>
            <person name="Mahairas G."/>
            <person name="Sabo P."/>
            <person name="Mungur R."/>
            <person name="Johnson L."/>
            <person name="Nguyen D."/>
            <person name="Wang J."/>
            <person name="Forst C."/>
            <person name="Hood L."/>
        </authorList>
    </citation>
    <scope>NUCLEOTIDE SEQUENCE [LARGE SCALE GENOMIC DNA]</scope>
    <source>
        <strain>35000HP / ATCC 700724</strain>
    </source>
</reference>
<organism>
    <name type="scientific">Haemophilus ducreyi (strain 35000HP / ATCC 700724)</name>
    <dbReference type="NCBI Taxonomy" id="233412"/>
    <lineage>
        <taxon>Bacteria</taxon>
        <taxon>Pseudomonadati</taxon>
        <taxon>Pseudomonadota</taxon>
        <taxon>Gammaproteobacteria</taxon>
        <taxon>Pasteurellales</taxon>
        <taxon>Pasteurellaceae</taxon>
        <taxon>Haemophilus</taxon>
    </lineage>
</organism>